<feature type="chain" id="PRO_0000318899" description="PRKCA-binding protein">
    <location>
        <begin position="1"/>
        <end position="415"/>
    </location>
</feature>
<feature type="domain" description="PDZ" evidence="5">
    <location>
        <begin position="22"/>
        <end position="105"/>
    </location>
</feature>
<feature type="domain" description="AH" evidence="6">
    <location>
        <begin position="144"/>
        <end position="357"/>
    </location>
</feature>
<feature type="region of interest" description="Disordered" evidence="7">
    <location>
        <begin position="376"/>
        <end position="415"/>
    </location>
</feature>
<feature type="compositionally biased region" description="Acidic residues" evidence="7">
    <location>
        <begin position="377"/>
        <end position="391"/>
    </location>
</feature>
<feature type="binding site" evidence="1">
    <location>
        <position position="44"/>
    </location>
    <ligand>
        <name>Zn(2+)</name>
        <dbReference type="ChEBI" id="CHEBI:29105"/>
    </ligand>
</feature>
<feature type="binding site" evidence="1">
    <location>
        <position position="46"/>
    </location>
    <ligand>
        <name>Zn(2+)</name>
        <dbReference type="ChEBI" id="CHEBI:29105"/>
    </ligand>
</feature>
<feature type="modified residue" description="Phosphothreonine" evidence="4">
    <location>
        <position position="82"/>
    </location>
</feature>
<feature type="lipid moiety-binding region" description="S-palmitoyl cysteine; by DHHC8" evidence="1">
    <location>
        <position position="413"/>
    </location>
</feature>
<keyword id="KW-0009">Actin-binding</keyword>
<keyword id="KW-0106">Calcium</keyword>
<keyword id="KW-0963">Cytoplasm</keyword>
<keyword id="KW-0206">Cytoskeleton</keyword>
<keyword id="KW-0449">Lipoprotein</keyword>
<keyword id="KW-0472">Membrane</keyword>
<keyword id="KW-0479">Metal-binding</keyword>
<keyword id="KW-0564">Palmitate</keyword>
<keyword id="KW-0597">Phosphoprotein</keyword>
<keyword id="KW-1185">Reference proteome</keyword>
<keyword id="KW-0770">Synapse</keyword>
<keyword id="KW-0771">Synaptosome</keyword>
<keyword id="KW-0862">Zinc</keyword>
<reference key="1">
    <citation type="submission" date="2005-06" db="EMBL/GenBank/DDBJ databases">
        <title>DNA sequences of macaque genes expressed in brain or testis and its evolutionary implications.</title>
        <authorList>
            <consortium name="International consortium for macaque cDNA sequencing and analysis"/>
        </authorList>
    </citation>
    <scope>NUCLEOTIDE SEQUENCE [LARGE SCALE MRNA]</scope>
    <source>
        <tissue>Testis</tissue>
    </source>
</reference>
<name>PICK1_MACFA</name>
<gene>
    <name type="primary">PICK1</name>
    <name type="synonym">PRKCABP</name>
    <name type="ORF">QtsA-14644</name>
</gene>
<comment type="function">
    <text evidence="1">Probable adapter protein that bind to and organize the subcellular localization of a variety of membrane proteins containing some PDZ recognition sequence. Involved in the clustering of various receptors, possibly by acting at the receptor internalization level. Plays a role in synaptic plasticity by regulating the trafficking and internalization of AMPA receptors. May be regulated upon PRKCA activation. May regulate ASIC1/ASIC3 channel. Regulates actin polymerization by inhibiting the actin-nucleating activity of the Arp2/3 complex; the function is competitive with nucleation promoting factors and is linked to neuronal morphology regulation and AMPA receptor (AMPAR) endocytosis. Via interaction with the Arp2/3 complex involved in regulation of synaptic plasicity of excitatory synapses and required for spine shrinkage during long-term depression (LTD). Involved in regulation of astrocyte morphology, antagonistic to Arp2/3 complex activator WASL/N-WASP function (By similarity).</text>
</comment>
<comment type="subunit">
    <text evidence="2 4">Monomer and homodimer. Interacts with CXADR. Interacts presynaptically with the glutamate receptors GRIA2, GRIA3, GRIK3, isoform 3 of GRIA4, isoform A of GRM4, GRM7 and GRM8; with NAPA and NAPB; and with BTG2. The interaction with NAPA and NAPB disrupts the interaction with GRIA2, conducting to the internalization of GRIA2. Interacts with PRKCA; with the amine transporters SLC6A2 and SLC6A3; with the channels ASIC1 and ASIC2; with the GTP-binding proteins ARF1 and ARF3; with the ephrin receptor tyrosine kinases EPHA7, EPHB1 and EPHB2; with ERBB2 and through its PDZ domain with the C-terminal tail of PRLHR. Interacts with UNC5A. Interacts (via AH domain) with NCS1/FREQ; in a calcium-dependent manner. Interacts with F-actin and associates with the ARP2/3 complex. Interacts (via PDZ domain) with ARF1 (activated); the interaction blocks Arp2/3 complex inhibition. Interacts with SORCS3 (By similarity).</text>
</comment>
<comment type="subcellular location">
    <subcellularLocation>
        <location evidence="3">Cytoplasm</location>
        <location evidence="3">Perinuclear region</location>
    </subcellularLocation>
    <subcellularLocation>
        <location evidence="3">Membrane</location>
        <topology evidence="3">Peripheral membrane protein</topology>
    </subcellularLocation>
    <subcellularLocation>
        <location evidence="2">Membrane</location>
        <topology evidence="2">Lipid-anchor</topology>
    </subcellularLocation>
    <subcellularLocation>
        <location evidence="3">Postsynaptic density</location>
    </subcellularLocation>
    <subcellularLocation>
        <location evidence="3">Synapse</location>
        <location evidence="3">Synaptosome</location>
    </subcellularLocation>
    <subcellularLocation>
        <location evidence="3">Cytoplasm</location>
        <location evidence="3">Cytoskeleton</location>
    </subcellularLocation>
    <text evidence="3">Also membrane-associated, present at excitatory synapses.</text>
</comment>
<comment type="domain">
    <text evidence="1">The AH domain mediates binding to F-actin.</text>
</comment>
<comment type="domain">
    <text evidence="1">The unoccupied PDZ domain is probably involved in allosteric modulation by forming an intramolecular bridge with the AH domain leading to a 'closed' formation. Binding of a PDZ ligand, such as GRIA2, allows enhanced interactions with F-actin and the Arp2/3 complex thus enhanced inhibition of actin polymerization (By similarity).</text>
</comment>
<comment type="PTM">
    <text evidence="1">Phosphorylation at Thr-82 appears to inhibit the interaction with AMPA receptors.</text>
</comment>
<comment type="PTM">
    <text evidence="1">Palmitoylation on Cys-413 is essential for long-term synaptic depression (LTD).</text>
</comment>
<sequence length="415" mass="46628">MFADLDYDIEEDKLGIPTVPGKVTLQKDAQNLIGISIGGGAQYCPCLYIVQVFDNTPAALDGTVAAGDEITGVNGRSIKGKTKVEVAKMIQEVKGEVTIHYNKLQADPKQGMSLDIVLKKVKHRLVENMSSGTADALGLSRAILCNDGLVKRLEELERTAELYKGMTEHTKNLLRVFYELSQTHRAFGDVFSVIGVREPQPAASEAFVKFADAHRSIEKFGIRLLKTIKPMLTDLNTYLNKAIPDTRLTIKKYLDVKFEYLSYCLKVKEMDDEEYSCIALGEPLYRVSTGNYEYRLILRCRQEARARFSQMRKDVLEKMELLDQKHVQDIVFQLQRLVSTMSKYYNDCYAVLRDADVFPIEVDLAHTTLAYGLNQEEFTDGEEEEEEEDTAAGEPSRDTRGAAGPLDKGGSWCDS</sequence>
<protein>
    <recommendedName>
        <fullName>PRKCA-binding protein</fullName>
    </recommendedName>
    <alternativeName>
        <fullName>Protein interacting with C kinase 1</fullName>
    </alternativeName>
    <alternativeName>
        <fullName>Protein kinase C-alpha-binding protein</fullName>
    </alternativeName>
</protein>
<organism>
    <name type="scientific">Macaca fascicularis</name>
    <name type="common">Crab-eating macaque</name>
    <name type="synonym">Cynomolgus monkey</name>
    <dbReference type="NCBI Taxonomy" id="9541"/>
    <lineage>
        <taxon>Eukaryota</taxon>
        <taxon>Metazoa</taxon>
        <taxon>Chordata</taxon>
        <taxon>Craniata</taxon>
        <taxon>Vertebrata</taxon>
        <taxon>Euteleostomi</taxon>
        <taxon>Mammalia</taxon>
        <taxon>Eutheria</taxon>
        <taxon>Euarchontoglires</taxon>
        <taxon>Primates</taxon>
        <taxon>Haplorrhini</taxon>
        <taxon>Catarrhini</taxon>
        <taxon>Cercopithecidae</taxon>
        <taxon>Cercopithecinae</taxon>
        <taxon>Macaca</taxon>
    </lineage>
</organism>
<accession>Q4R7Q5</accession>
<proteinExistence type="evidence at transcript level"/>
<evidence type="ECO:0000250" key="1"/>
<evidence type="ECO:0000250" key="2">
    <source>
        <dbReference type="UniProtKB" id="Q62083"/>
    </source>
</evidence>
<evidence type="ECO:0000250" key="3">
    <source>
        <dbReference type="UniProtKB" id="Q9EP80"/>
    </source>
</evidence>
<evidence type="ECO:0000250" key="4">
    <source>
        <dbReference type="UniProtKB" id="Q9NRD5"/>
    </source>
</evidence>
<evidence type="ECO:0000255" key="5">
    <source>
        <dbReference type="PROSITE-ProRule" id="PRU00143"/>
    </source>
</evidence>
<evidence type="ECO:0000255" key="6">
    <source>
        <dbReference type="PROSITE-ProRule" id="PRU00294"/>
    </source>
</evidence>
<evidence type="ECO:0000256" key="7">
    <source>
        <dbReference type="SAM" id="MobiDB-lite"/>
    </source>
</evidence>
<dbReference type="EMBL" id="AB168760">
    <property type="protein sequence ID" value="BAE00867.1"/>
    <property type="molecule type" value="mRNA"/>
</dbReference>
<dbReference type="SMR" id="Q4R7Q5"/>
<dbReference type="STRING" id="9541.ENSMFAP00000034746"/>
<dbReference type="eggNOG" id="KOG3651">
    <property type="taxonomic scope" value="Eukaryota"/>
</dbReference>
<dbReference type="Proteomes" id="UP000233100">
    <property type="component" value="Unplaced"/>
</dbReference>
<dbReference type="GO" id="GO:0005856">
    <property type="term" value="C:cytoskeleton"/>
    <property type="evidence" value="ECO:0007669"/>
    <property type="project" value="UniProtKB-SubCell"/>
</dbReference>
<dbReference type="GO" id="GO:0043005">
    <property type="term" value="C:neuron projection"/>
    <property type="evidence" value="ECO:0000250"/>
    <property type="project" value="UniProtKB"/>
</dbReference>
<dbReference type="GO" id="GO:0048471">
    <property type="term" value="C:perinuclear region of cytoplasm"/>
    <property type="evidence" value="ECO:0007669"/>
    <property type="project" value="UniProtKB-SubCell"/>
</dbReference>
<dbReference type="GO" id="GO:0005886">
    <property type="term" value="C:plasma membrane"/>
    <property type="evidence" value="ECO:0007669"/>
    <property type="project" value="GOC"/>
</dbReference>
<dbReference type="GO" id="GO:0014069">
    <property type="term" value="C:postsynaptic density"/>
    <property type="evidence" value="ECO:0007669"/>
    <property type="project" value="UniProtKB-SubCell"/>
</dbReference>
<dbReference type="GO" id="GO:0098842">
    <property type="term" value="C:postsynaptic early endosome"/>
    <property type="evidence" value="ECO:0007669"/>
    <property type="project" value="TreeGrafter"/>
</dbReference>
<dbReference type="GO" id="GO:0008021">
    <property type="term" value="C:synaptic vesicle"/>
    <property type="evidence" value="ECO:0007669"/>
    <property type="project" value="TreeGrafter"/>
</dbReference>
<dbReference type="GO" id="GO:0032588">
    <property type="term" value="C:trans-Golgi network membrane"/>
    <property type="evidence" value="ECO:0007669"/>
    <property type="project" value="TreeGrafter"/>
</dbReference>
<dbReference type="GO" id="GO:0051015">
    <property type="term" value="F:actin filament binding"/>
    <property type="evidence" value="ECO:0000250"/>
    <property type="project" value="UniProtKB"/>
</dbReference>
<dbReference type="GO" id="GO:0071933">
    <property type="term" value="F:Arp2/3 complex binding"/>
    <property type="evidence" value="ECO:0000250"/>
    <property type="project" value="UniProtKB"/>
</dbReference>
<dbReference type="GO" id="GO:0046872">
    <property type="term" value="F:metal ion binding"/>
    <property type="evidence" value="ECO:0007669"/>
    <property type="project" value="UniProtKB-KW"/>
</dbReference>
<dbReference type="GO" id="GO:0005543">
    <property type="term" value="F:phospholipid binding"/>
    <property type="evidence" value="ECO:0007669"/>
    <property type="project" value="TreeGrafter"/>
</dbReference>
<dbReference type="GO" id="GO:0019904">
    <property type="term" value="F:protein domain specific binding"/>
    <property type="evidence" value="ECO:0007669"/>
    <property type="project" value="InterPro"/>
</dbReference>
<dbReference type="GO" id="GO:0005080">
    <property type="term" value="F:protein kinase C binding"/>
    <property type="evidence" value="ECO:0007669"/>
    <property type="project" value="TreeGrafter"/>
</dbReference>
<dbReference type="GO" id="GO:0036294">
    <property type="term" value="P:cellular response to decreased oxygen levels"/>
    <property type="evidence" value="ECO:0000250"/>
    <property type="project" value="UniProtKB"/>
</dbReference>
<dbReference type="GO" id="GO:0042149">
    <property type="term" value="P:cellular response to glucose starvation"/>
    <property type="evidence" value="ECO:0000250"/>
    <property type="project" value="UniProtKB"/>
</dbReference>
<dbReference type="GO" id="GO:0097062">
    <property type="term" value="P:dendritic spine maintenance"/>
    <property type="evidence" value="ECO:0000250"/>
    <property type="project" value="UniProtKB"/>
</dbReference>
<dbReference type="GO" id="GO:0097061">
    <property type="term" value="P:dendritic spine organization"/>
    <property type="evidence" value="ECO:0000250"/>
    <property type="project" value="UniProtKB"/>
</dbReference>
<dbReference type="GO" id="GO:0021782">
    <property type="term" value="P:glial cell development"/>
    <property type="evidence" value="ECO:0000250"/>
    <property type="project" value="UniProtKB"/>
</dbReference>
<dbReference type="GO" id="GO:0006886">
    <property type="term" value="P:intracellular protein transport"/>
    <property type="evidence" value="ECO:0007669"/>
    <property type="project" value="TreeGrafter"/>
</dbReference>
<dbReference type="GO" id="GO:0060292">
    <property type="term" value="P:long-term synaptic depression"/>
    <property type="evidence" value="ECO:0000250"/>
    <property type="project" value="UniProtKB"/>
</dbReference>
<dbReference type="GO" id="GO:0034316">
    <property type="term" value="P:negative regulation of Arp2/3 complex-mediated actin nucleation"/>
    <property type="evidence" value="ECO:0000250"/>
    <property type="project" value="UniProtKB"/>
</dbReference>
<dbReference type="GO" id="GO:0002092">
    <property type="term" value="P:positive regulation of receptor internalization"/>
    <property type="evidence" value="ECO:0000250"/>
    <property type="project" value="UniProtKB"/>
</dbReference>
<dbReference type="GO" id="GO:0043113">
    <property type="term" value="P:receptor clustering"/>
    <property type="evidence" value="ECO:0007669"/>
    <property type="project" value="TreeGrafter"/>
</dbReference>
<dbReference type="CDD" id="cd07659">
    <property type="entry name" value="BAR_PICK1"/>
    <property type="match status" value="1"/>
</dbReference>
<dbReference type="CDD" id="cd06722">
    <property type="entry name" value="PDZ_PICK1-like"/>
    <property type="match status" value="1"/>
</dbReference>
<dbReference type="FunFam" id="1.20.1270.60:FF:000023">
    <property type="entry name" value="Interacting with PRKCA"/>
    <property type="match status" value="1"/>
</dbReference>
<dbReference type="FunFam" id="2.30.42.10:FF:000073">
    <property type="entry name" value="Interacting with PRKCA"/>
    <property type="match status" value="1"/>
</dbReference>
<dbReference type="Gene3D" id="2.30.42.10">
    <property type="match status" value="1"/>
</dbReference>
<dbReference type="Gene3D" id="1.20.1270.60">
    <property type="entry name" value="Arfaptin homology (AH) domain/BAR domain"/>
    <property type="match status" value="1"/>
</dbReference>
<dbReference type="InterPro" id="IPR027267">
    <property type="entry name" value="AH/BAR_dom_sf"/>
</dbReference>
<dbReference type="InterPro" id="IPR010504">
    <property type="entry name" value="AH_dom"/>
</dbReference>
<dbReference type="InterPro" id="IPR030798">
    <property type="entry name" value="Arfaptin_fam"/>
</dbReference>
<dbReference type="InterPro" id="IPR001478">
    <property type="entry name" value="PDZ"/>
</dbReference>
<dbReference type="InterPro" id="IPR036034">
    <property type="entry name" value="PDZ_sf"/>
</dbReference>
<dbReference type="InterPro" id="IPR037959">
    <property type="entry name" value="PICK1_BAR"/>
</dbReference>
<dbReference type="PANTHER" id="PTHR12141">
    <property type="entry name" value="ARFAPTIN-RELATED"/>
    <property type="match status" value="1"/>
</dbReference>
<dbReference type="PANTHER" id="PTHR12141:SF1">
    <property type="entry name" value="PRKCA-BINDING PROTEIN"/>
    <property type="match status" value="1"/>
</dbReference>
<dbReference type="Pfam" id="PF06456">
    <property type="entry name" value="Arfaptin"/>
    <property type="match status" value="1"/>
</dbReference>
<dbReference type="Pfam" id="PF00595">
    <property type="entry name" value="PDZ"/>
    <property type="match status" value="1"/>
</dbReference>
<dbReference type="SMART" id="SM01015">
    <property type="entry name" value="Arfaptin"/>
    <property type="match status" value="1"/>
</dbReference>
<dbReference type="SMART" id="SM00228">
    <property type="entry name" value="PDZ"/>
    <property type="match status" value="1"/>
</dbReference>
<dbReference type="SUPFAM" id="SSF103657">
    <property type="entry name" value="BAR/IMD domain-like"/>
    <property type="match status" value="1"/>
</dbReference>
<dbReference type="SUPFAM" id="SSF50156">
    <property type="entry name" value="PDZ domain-like"/>
    <property type="match status" value="1"/>
</dbReference>
<dbReference type="PROSITE" id="PS50870">
    <property type="entry name" value="AH"/>
    <property type="match status" value="1"/>
</dbReference>
<dbReference type="PROSITE" id="PS50106">
    <property type="entry name" value="PDZ"/>
    <property type="match status" value="1"/>
</dbReference>